<accession>A1R7V3</accession>
<feature type="chain" id="PRO_0000339474" description="ATP synthase subunit beta">
    <location>
        <begin position="1"/>
        <end position="483"/>
    </location>
</feature>
<feature type="binding site" evidence="1">
    <location>
        <begin position="167"/>
        <end position="174"/>
    </location>
    <ligand>
        <name>ATP</name>
        <dbReference type="ChEBI" id="CHEBI:30616"/>
    </ligand>
</feature>
<gene>
    <name evidence="1" type="primary">atpD</name>
    <name type="ordered locus">AAur_2594</name>
</gene>
<dbReference type="EC" id="7.1.2.2" evidence="1"/>
<dbReference type="EMBL" id="CP000474">
    <property type="protein sequence ID" value="ABM06774.1"/>
    <property type="status" value="ALT_INIT"/>
    <property type="molecule type" value="Genomic_DNA"/>
</dbReference>
<dbReference type="RefSeq" id="WP_014922173.1">
    <property type="nucleotide sequence ID" value="NC_008711.1"/>
</dbReference>
<dbReference type="SMR" id="A1R7V3"/>
<dbReference type="STRING" id="290340.AAur_2594"/>
<dbReference type="GeneID" id="84018636"/>
<dbReference type="KEGG" id="aau:AAur_2594"/>
<dbReference type="eggNOG" id="COG0055">
    <property type="taxonomic scope" value="Bacteria"/>
</dbReference>
<dbReference type="HOGENOM" id="CLU_022398_0_2_11"/>
<dbReference type="OrthoDB" id="9801639at2"/>
<dbReference type="Proteomes" id="UP000000637">
    <property type="component" value="Chromosome"/>
</dbReference>
<dbReference type="GO" id="GO:0005886">
    <property type="term" value="C:plasma membrane"/>
    <property type="evidence" value="ECO:0007669"/>
    <property type="project" value="UniProtKB-SubCell"/>
</dbReference>
<dbReference type="GO" id="GO:0045259">
    <property type="term" value="C:proton-transporting ATP synthase complex"/>
    <property type="evidence" value="ECO:0007669"/>
    <property type="project" value="UniProtKB-KW"/>
</dbReference>
<dbReference type="GO" id="GO:0005524">
    <property type="term" value="F:ATP binding"/>
    <property type="evidence" value="ECO:0007669"/>
    <property type="project" value="UniProtKB-UniRule"/>
</dbReference>
<dbReference type="GO" id="GO:0016887">
    <property type="term" value="F:ATP hydrolysis activity"/>
    <property type="evidence" value="ECO:0007669"/>
    <property type="project" value="InterPro"/>
</dbReference>
<dbReference type="GO" id="GO:0046933">
    <property type="term" value="F:proton-transporting ATP synthase activity, rotational mechanism"/>
    <property type="evidence" value="ECO:0007669"/>
    <property type="project" value="UniProtKB-UniRule"/>
</dbReference>
<dbReference type="CDD" id="cd18110">
    <property type="entry name" value="ATP-synt_F1_beta_C"/>
    <property type="match status" value="1"/>
</dbReference>
<dbReference type="CDD" id="cd18115">
    <property type="entry name" value="ATP-synt_F1_beta_N"/>
    <property type="match status" value="1"/>
</dbReference>
<dbReference type="CDD" id="cd01133">
    <property type="entry name" value="F1-ATPase_beta_CD"/>
    <property type="match status" value="1"/>
</dbReference>
<dbReference type="FunFam" id="1.10.1140.10:FF:000005">
    <property type="entry name" value="ATP synthase subunit beta"/>
    <property type="match status" value="1"/>
</dbReference>
<dbReference type="FunFam" id="2.40.10.170:FF:000005">
    <property type="entry name" value="ATP synthase subunit beta"/>
    <property type="match status" value="1"/>
</dbReference>
<dbReference type="FunFam" id="3.40.50.300:FF:000004">
    <property type="entry name" value="ATP synthase subunit beta"/>
    <property type="match status" value="1"/>
</dbReference>
<dbReference type="Gene3D" id="2.40.10.170">
    <property type="match status" value="1"/>
</dbReference>
<dbReference type="Gene3D" id="1.10.1140.10">
    <property type="entry name" value="Bovine Mitochondrial F1-atpase, Atp Synthase Beta Chain, Chain D, domain 3"/>
    <property type="match status" value="1"/>
</dbReference>
<dbReference type="Gene3D" id="3.40.50.300">
    <property type="entry name" value="P-loop containing nucleotide triphosphate hydrolases"/>
    <property type="match status" value="1"/>
</dbReference>
<dbReference type="HAMAP" id="MF_01347">
    <property type="entry name" value="ATP_synth_beta_bact"/>
    <property type="match status" value="1"/>
</dbReference>
<dbReference type="InterPro" id="IPR003593">
    <property type="entry name" value="AAA+_ATPase"/>
</dbReference>
<dbReference type="InterPro" id="IPR055190">
    <property type="entry name" value="ATP-synt_VA_C"/>
</dbReference>
<dbReference type="InterPro" id="IPR005722">
    <property type="entry name" value="ATP_synth_F1_bsu"/>
</dbReference>
<dbReference type="InterPro" id="IPR020003">
    <property type="entry name" value="ATPase_a/bsu_AS"/>
</dbReference>
<dbReference type="InterPro" id="IPR050053">
    <property type="entry name" value="ATPase_alpha/beta_chains"/>
</dbReference>
<dbReference type="InterPro" id="IPR004100">
    <property type="entry name" value="ATPase_F1/V1/A1_a/bsu_N"/>
</dbReference>
<dbReference type="InterPro" id="IPR036121">
    <property type="entry name" value="ATPase_F1/V1/A1_a/bsu_N_sf"/>
</dbReference>
<dbReference type="InterPro" id="IPR000194">
    <property type="entry name" value="ATPase_F1/V1/A1_a/bsu_nucl-bd"/>
</dbReference>
<dbReference type="InterPro" id="IPR024034">
    <property type="entry name" value="ATPase_F1/V1_b/a_C"/>
</dbReference>
<dbReference type="InterPro" id="IPR027417">
    <property type="entry name" value="P-loop_NTPase"/>
</dbReference>
<dbReference type="NCBIfam" id="TIGR01039">
    <property type="entry name" value="atpD"/>
    <property type="match status" value="1"/>
</dbReference>
<dbReference type="PANTHER" id="PTHR15184">
    <property type="entry name" value="ATP SYNTHASE"/>
    <property type="match status" value="1"/>
</dbReference>
<dbReference type="PANTHER" id="PTHR15184:SF71">
    <property type="entry name" value="ATP SYNTHASE SUBUNIT BETA, MITOCHONDRIAL"/>
    <property type="match status" value="1"/>
</dbReference>
<dbReference type="Pfam" id="PF00006">
    <property type="entry name" value="ATP-synt_ab"/>
    <property type="match status" value="1"/>
</dbReference>
<dbReference type="Pfam" id="PF02874">
    <property type="entry name" value="ATP-synt_ab_N"/>
    <property type="match status" value="1"/>
</dbReference>
<dbReference type="Pfam" id="PF22919">
    <property type="entry name" value="ATP-synt_VA_C"/>
    <property type="match status" value="1"/>
</dbReference>
<dbReference type="SMART" id="SM00382">
    <property type="entry name" value="AAA"/>
    <property type="match status" value="1"/>
</dbReference>
<dbReference type="SUPFAM" id="SSF47917">
    <property type="entry name" value="C-terminal domain of alpha and beta subunits of F1 ATP synthase"/>
    <property type="match status" value="1"/>
</dbReference>
<dbReference type="SUPFAM" id="SSF50615">
    <property type="entry name" value="N-terminal domain of alpha and beta subunits of F1 ATP synthase"/>
    <property type="match status" value="1"/>
</dbReference>
<dbReference type="SUPFAM" id="SSF52540">
    <property type="entry name" value="P-loop containing nucleoside triphosphate hydrolases"/>
    <property type="match status" value="1"/>
</dbReference>
<dbReference type="PROSITE" id="PS00152">
    <property type="entry name" value="ATPASE_ALPHA_BETA"/>
    <property type="match status" value="1"/>
</dbReference>
<keyword id="KW-0066">ATP synthesis</keyword>
<keyword id="KW-0067">ATP-binding</keyword>
<keyword id="KW-1003">Cell membrane</keyword>
<keyword id="KW-0139">CF(1)</keyword>
<keyword id="KW-0375">Hydrogen ion transport</keyword>
<keyword id="KW-0406">Ion transport</keyword>
<keyword id="KW-0472">Membrane</keyword>
<keyword id="KW-0547">Nucleotide-binding</keyword>
<keyword id="KW-1278">Translocase</keyword>
<keyword id="KW-0813">Transport</keyword>
<sequence length="483" mass="52339">MTATATEHVATAGATGRIARVIGPVVDVEFPADAIPSIYNALTTEITLNGQTKTITFETSQHLGDNLVRAISLQATDGLVRGTTVQDSGAPISVPVGDGVKGHIFNVLGKPLDVEESEIKADAYWPIHRKAPSFASLEGSTEMLETGIKVIDLLTPYIKGGKIGLFGGAGVGKTVLIQEMITRVARNFGGTSVFAGVGERTREGNDLWVEMEEAGVLKDTALVFGQMDEPPGTRLRVALSALTMAEYFRDVQNQDVLLFIDNIFRFTQAGSEVSTLLGRMPSAVGYQPNLADEMGLLQERITSTKGHSITSMQAIYVPADDYTDPAPATTFAHLDATTELSREIASRGLYPAVDPLTSTSRILDPQYIGKDHYNTAVRVKQILQKNKELQDIIAILGVDELSEEDKIVVSRARRIQQFLSQNTYTAKQFTGVEGSTVSIKDTVEGFTAICDGELDHIAEQAFFNVGGLDDVERNWAKIQEQTK</sequence>
<name>ATPB_PAEAT</name>
<proteinExistence type="inferred from homology"/>
<evidence type="ECO:0000255" key="1">
    <source>
        <dbReference type="HAMAP-Rule" id="MF_01347"/>
    </source>
</evidence>
<evidence type="ECO:0000305" key="2"/>
<comment type="function">
    <text evidence="1">Produces ATP from ADP in the presence of a proton gradient across the membrane. The catalytic sites are hosted primarily by the beta subunits.</text>
</comment>
<comment type="catalytic activity">
    <reaction evidence="1">
        <text>ATP + H2O + 4 H(+)(in) = ADP + phosphate + 5 H(+)(out)</text>
        <dbReference type="Rhea" id="RHEA:57720"/>
        <dbReference type="ChEBI" id="CHEBI:15377"/>
        <dbReference type="ChEBI" id="CHEBI:15378"/>
        <dbReference type="ChEBI" id="CHEBI:30616"/>
        <dbReference type="ChEBI" id="CHEBI:43474"/>
        <dbReference type="ChEBI" id="CHEBI:456216"/>
        <dbReference type="EC" id="7.1.2.2"/>
    </reaction>
</comment>
<comment type="subunit">
    <text evidence="1">F-type ATPases have 2 components, CF(1) - the catalytic core - and CF(0) - the membrane proton channel. CF(1) has five subunits: alpha(3), beta(3), gamma(1), delta(1), epsilon(1). CF(0) has three main subunits: a(1), b(2) and c(9-12). The alpha and beta chains form an alternating ring which encloses part of the gamma chain. CF(1) is attached to CF(0) by a central stalk formed by the gamma and epsilon chains, while a peripheral stalk is formed by the delta and b chains.</text>
</comment>
<comment type="subcellular location">
    <subcellularLocation>
        <location evidence="1">Cell membrane</location>
        <topology evidence="1">Peripheral membrane protein</topology>
    </subcellularLocation>
</comment>
<comment type="similarity">
    <text evidence="1">Belongs to the ATPase alpha/beta chains family.</text>
</comment>
<comment type="sequence caution" evidence="2">
    <conflict type="erroneous initiation">
        <sequence resource="EMBL-CDS" id="ABM06774"/>
    </conflict>
</comment>
<organism>
    <name type="scientific">Paenarthrobacter aurescens (strain TC1)</name>
    <dbReference type="NCBI Taxonomy" id="290340"/>
    <lineage>
        <taxon>Bacteria</taxon>
        <taxon>Bacillati</taxon>
        <taxon>Actinomycetota</taxon>
        <taxon>Actinomycetes</taxon>
        <taxon>Micrococcales</taxon>
        <taxon>Micrococcaceae</taxon>
        <taxon>Paenarthrobacter</taxon>
    </lineage>
</organism>
<protein>
    <recommendedName>
        <fullName evidence="1">ATP synthase subunit beta</fullName>
        <ecNumber evidence="1">7.1.2.2</ecNumber>
    </recommendedName>
    <alternativeName>
        <fullName evidence="1">ATP synthase F1 sector subunit beta</fullName>
    </alternativeName>
    <alternativeName>
        <fullName evidence="1">F-ATPase subunit beta</fullName>
    </alternativeName>
</protein>
<reference key="1">
    <citation type="journal article" date="2006" name="PLoS Genet.">
        <title>Secrets of soil survival revealed by the genome sequence of Arthrobacter aurescens TC1.</title>
        <authorList>
            <person name="Mongodin E.F."/>
            <person name="Shapir N."/>
            <person name="Daugherty S.C."/>
            <person name="DeBoy R.T."/>
            <person name="Emerson J.B."/>
            <person name="Shvartzbeyn A."/>
            <person name="Radune D."/>
            <person name="Vamathevan J."/>
            <person name="Riggs F."/>
            <person name="Grinberg V."/>
            <person name="Khouri H.M."/>
            <person name="Wackett L.P."/>
            <person name="Nelson K.E."/>
            <person name="Sadowsky M.J."/>
        </authorList>
    </citation>
    <scope>NUCLEOTIDE SEQUENCE [LARGE SCALE GENOMIC DNA]</scope>
    <source>
        <strain>TC1</strain>
    </source>
</reference>